<reference key="1">
    <citation type="journal article" date="2005" name="PLoS Biol.">
        <title>The Wolbachia genome of Brugia malayi: endosymbiont evolution within a human pathogenic nematode.</title>
        <authorList>
            <person name="Foster J."/>
            <person name="Ganatra M."/>
            <person name="Kamal I."/>
            <person name="Ware J."/>
            <person name="Makarova K."/>
            <person name="Ivanova N."/>
            <person name="Bhattacharyya A."/>
            <person name="Kapatral V."/>
            <person name="Kumar S."/>
            <person name="Posfai J."/>
            <person name="Vincze T."/>
            <person name="Ingram J."/>
            <person name="Moran L."/>
            <person name="Lapidus A."/>
            <person name="Omelchenko M."/>
            <person name="Kyrpides N."/>
            <person name="Ghedin E."/>
            <person name="Wang S."/>
            <person name="Goltsman E."/>
            <person name="Joukov V."/>
            <person name="Ostrovskaya O."/>
            <person name="Tsukerman K."/>
            <person name="Mazur M."/>
            <person name="Comb D."/>
            <person name="Koonin E."/>
            <person name="Slatko B."/>
        </authorList>
    </citation>
    <scope>NUCLEOTIDE SEQUENCE [LARGE SCALE GENOMIC DNA]</scope>
    <source>
        <strain>TRS</strain>
    </source>
</reference>
<proteinExistence type="inferred from homology"/>
<dbReference type="EMBL" id="AE017321">
    <property type="protein sequence ID" value="AAW71395.1"/>
    <property type="molecule type" value="Genomic_DNA"/>
</dbReference>
<dbReference type="SMR" id="Q5GRH9"/>
<dbReference type="STRING" id="292805.Wbm0807"/>
<dbReference type="KEGG" id="wbm:Wbm0807"/>
<dbReference type="eggNOG" id="COG0264">
    <property type="taxonomic scope" value="Bacteria"/>
</dbReference>
<dbReference type="HOGENOM" id="CLU_047155_0_2_5"/>
<dbReference type="Proteomes" id="UP000000534">
    <property type="component" value="Chromosome"/>
</dbReference>
<dbReference type="GO" id="GO:0005737">
    <property type="term" value="C:cytoplasm"/>
    <property type="evidence" value="ECO:0007669"/>
    <property type="project" value="UniProtKB-SubCell"/>
</dbReference>
<dbReference type="GO" id="GO:0003746">
    <property type="term" value="F:translation elongation factor activity"/>
    <property type="evidence" value="ECO:0007669"/>
    <property type="project" value="UniProtKB-UniRule"/>
</dbReference>
<dbReference type="CDD" id="cd14275">
    <property type="entry name" value="UBA_EF-Ts"/>
    <property type="match status" value="1"/>
</dbReference>
<dbReference type="FunFam" id="1.10.8.10:FF:000001">
    <property type="entry name" value="Elongation factor Ts"/>
    <property type="match status" value="1"/>
</dbReference>
<dbReference type="Gene3D" id="1.10.286.20">
    <property type="match status" value="1"/>
</dbReference>
<dbReference type="Gene3D" id="1.10.8.10">
    <property type="entry name" value="DNA helicase RuvA subunit, C-terminal domain"/>
    <property type="match status" value="1"/>
</dbReference>
<dbReference type="Gene3D" id="3.30.479.20">
    <property type="entry name" value="Elongation factor Ts, dimerisation domain"/>
    <property type="match status" value="2"/>
</dbReference>
<dbReference type="HAMAP" id="MF_00050">
    <property type="entry name" value="EF_Ts"/>
    <property type="match status" value="1"/>
</dbReference>
<dbReference type="InterPro" id="IPR036402">
    <property type="entry name" value="EF-Ts_dimer_sf"/>
</dbReference>
<dbReference type="InterPro" id="IPR001816">
    <property type="entry name" value="Transl_elong_EFTs/EF1B"/>
</dbReference>
<dbReference type="InterPro" id="IPR014039">
    <property type="entry name" value="Transl_elong_EFTs/EF1B_dimer"/>
</dbReference>
<dbReference type="InterPro" id="IPR018101">
    <property type="entry name" value="Transl_elong_Ts_CS"/>
</dbReference>
<dbReference type="InterPro" id="IPR009060">
    <property type="entry name" value="UBA-like_sf"/>
</dbReference>
<dbReference type="NCBIfam" id="TIGR00116">
    <property type="entry name" value="tsf"/>
    <property type="match status" value="1"/>
</dbReference>
<dbReference type="PANTHER" id="PTHR11741">
    <property type="entry name" value="ELONGATION FACTOR TS"/>
    <property type="match status" value="1"/>
</dbReference>
<dbReference type="PANTHER" id="PTHR11741:SF0">
    <property type="entry name" value="ELONGATION FACTOR TS, MITOCHONDRIAL"/>
    <property type="match status" value="1"/>
</dbReference>
<dbReference type="Pfam" id="PF00889">
    <property type="entry name" value="EF_TS"/>
    <property type="match status" value="1"/>
</dbReference>
<dbReference type="SUPFAM" id="SSF54713">
    <property type="entry name" value="Elongation factor Ts (EF-Ts), dimerisation domain"/>
    <property type="match status" value="2"/>
</dbReference>
<dbReference type="SUPFAM" id="SSF46934">
    <property type="entry name" value="UBA-like"/>
    <property type="match status" value="1"/>
</dbReference>
<dbReference type="PROSITE" id="PS01126">
    <property type="entry name" value="EF_TS_1"/>
    <property type="match status" value="1"/>
</dbReference>
<dbReference type="PROSITE" id="PS01127">
    <property type="entry name" value="EF_TS_2"/>
    <property type="match status" value="1"/>
</dbReference>
<comment type="function">
    <text evidence="1">Associates with the EF-Tu.GDP complex and induces the exchange of GDP to GTP. It remains bound to the aminoacyl-tRNA.EF-Tu.GTP complex up to the GTP hydrolysis stage on the ribosome.</text>
</comment>
<comment type="subcellular location">
    <subcellularLocation>
        <location evidence="1">Cytoplasm</location>
    </subcellularLocation>
</comment>
<comment type="similarity">
    <text evidence="1">Belongs to the EF-Ts family.</text>
</comment>
<organism>
    <name type="scientific">Wolbachia sp. subsp. Brugia malayi (strain TRS)</name>
    <dbReference type="NCBI Taxonomy" id="292805"/>
    <lineage>
        <taxon>Bacteria</taxon>
        <taxon>Pseudomonadati</taxon>
        <taxon>Pseudomonadota</taxon>
        <taxon>Alphaproteobacteria</taxon>
        <taxon>Rickettsiales</taxon>
        <taxon>Anaplasmataceae</taxon>
        <taxon>Wolbachieae</taxon>
        <taxon>Wolbachia</taxon>
    </lineage>
</organism>
<gene>
    <name evidence="1" type="primary">tsf</name>
    <name type="ordered locus">Wbm0807</name>
</gene>
<name>EFTS_WOLTR</name>
<sequence>MNPDNIRELRDRTGLGLSDCKKALEECSGDIKEAIGKLRAIGLAKADKKIDRVASDGLIAMHLAESCGVLIELNCETDFVARNEKFIELISNLASIAYQERCTSIDKLKNAKYEGVGTVQEAIMNGTSVLGEKLELSRLCYLEAKDGVIAGYVHGDVRGLGKTGALVALRSSGDKSKLQEVGKQIAMHVVAMKPEALSIDNLDQTKMNNERSIIEEQVKGLNKSEEVTKKIVDGRMAKYYEEVILLEQKFIKDDKMKISDFMRLSESSVNSPVELSDYKLLVLGSKN</sequence>
<evidence type="ECO:0000255" key="1">
    <source>
        <dbReference type="HAMAP-Rule" id="MF_00050"/>
    </source>
</evidence>
<keyword id="KW-0963">Cytoplasm</keyword>
<keyword id="KW-0251">Elongation factor</keyword>
<keyword id="KW-0648">Protein biosynthesis</keyword>
<keyword id="KW-1185">Reference proteome</keyword>
<feature type="chain" id="PRO_0000241550" description="Elongation factor Ts">
    <location>
        <begin position="1"/>
        <end position="287"/>
    </location>
</feature>
<feature type="region of interest" description="Involved in Mg(2+) ion dislocation from EF-Tu" evidence="1">
    <location>
        <begin position="77"/>
        <end position="80"/>
    </location>
</feature>
<accession>Q5GRH9</accession>
<protein>
    <recommendedName>
        <fullName evidence="1">Elongation factor Ts</fullName>
        <shortName evidence="1">EF-Ts</shortName>
    </recommendedName>
</protein>